<gene>
    <name type="primary">Drd2</name>
</gene>
<sequence>MDPLNLSWYDDDLERQNWSRPFNGSEGKADRPHYNYYAMLLTLLIFIIVFGNVLVCMAVSREKALQTTTNYLIVSLAVADLLVATLVMPWVVYLEVVGEWKFSRIHCDIFVTLDVMMCTASILNLCAISIDRYTAVAMPMLYNTRYSSKRRVTVMIAIVWVLSFTISCPLLFGLNNTDQNECIIANPAFVVYSSIVSFYVPFIVTLLVYIKIYIVLRKRRKRVNTKRSSRAFRANLKTPLKGNCTHPEDMKLCTVIMKSNGSFPVNRRRMDAARRAQELEMEMLSSTSPPERTRYSPIPPSHHQLTLPDPSHHGLHSNPDSPAKPEKNGHAKIVNPRIAKFFEIQTMPNGKTRTSLKTMSRRKLSQQKEKKATQMLAIVLGVFIICWLPFFITHILNIHCDCNIPPVLYSAFTWLGYVNSAVNPIIYTTFNIEFRKAFMKILHC</sequence>
<evidence type="ECO:0000250" key="1"/>
<evidence type="ECO:0000250" key="2">
    <source>
        <dbReference type="UniProtKB" id="P14416"/>
    </source>
</evidence>
<evidence type="ECO:0000250" key="3">
    <source>
        <dbReference type="UniProtKB" id="P61168"/>
    </source>
</evidence>
<evidence type="ECO:0000255" key="4"/>
<evidence type="ECO:0000255" key="5">
    <source>
        <dbReference type="PROSITE-ProRule" id="PRU00521"/>
    </source>
</evidence>
<evidence type="ECO:0000256" key="6">
    <source>
        <dbReference type="SAM" id="MobiDB-lite"/>
    </source>
</evidence>
<evidence type="ECO:0000269" key="7">
    <source>
    </source>
</evidence>
<evidence type="ECO:0000269" key="8">
    <source>
    </source>
</evidence>
<evidence type="ECO:0000269" key="9">
    <source>
    </source>
</evidence>
<evidence type="ECO:0000269" key="10">
    <source>
    </source>
</evidence>
<evidence type="ECO:0000303" key="11">
    <source>
    </source>
</evidence>
<evidence type="ECO:0000305" key="12"/>
<proteinExistence type="evidence at protein level"/>
<protein>
    <recommendedName>
        <fullName>D(2) dopamine receptor</fullName>
    </recommendedName>
    <alternativeName>
        <fullName>Dopamine D2 receptor</fullName>
    </alternativeName>
</protein>
<organism>
    <name type="scientific">Rattus norvegicus</name>
    <name type="common">Rat</name>
    <dbReference type="NCBI Taxonomy" id="10116"/>
    <lineage>
        <taxon>Eukaryota</taxon>
        <taxon>Metazoa</taxon>
        <taxon>Chordata</taxon>
        <taxon>Craniata</taxon>
        <taxon>Vertebrata</taxon>
        <taxon>Euteleostomi</taxon>
        <taxon>Mammalia</taxon>
        <taxon>Eutheria</taxon>
        <taxon>Euarchontoglires</taxon>
        <taxon>Glires</taxon>
        <taxon>Rodentia</taxon>
        <taxon>Myomorpha</taxon>
        <taxon>Muroidea</taxon>
        <taxon>Muridae</taxon>
        <taxon>Murinae</taxon>
        <taxon>Rattus</taxon>
    </lineage>
</organism>
<accession>P61169</accession>
<accession>P13953</accession>
<reference key="1">
    <citation type="journal article" date="1988" name="Nature">
        <title>Cloning and expression of a rat D2 dopamine receptor cDNA.</title>
        <authorList>
            <person name="Bunzow J.R."/>
            <person name="van Tol H.H.M."/>
            <person name="Grandy D.K."/>
            <person name="Albert P."/>
            <person name="Salon J."/>
            <person name="Christie M."/>
            <person name="Machida C.A."/>
            <person name="Neve K.A."/>
            <person name="Civelli O."/>
        </authorList>
    </citation>
    <scope>NUCLEOTIDE SEQUENCE [MRNA] (ISOFORM SHORT)</scope>
    <source>
        <tissue>Brain</tissue>
    </source>
</reference>
<reference key="2">
    <citation type="journal article" date="1989" name="EMBO J.">
        <title>The dopamine D2 receptor: two molecular forms generated by alternative splicing.</title>
        <authorList>
            <person name="Dal-Toso R."/>
            <person name="Sommer B."/>
            <person name="Ewert M."/>
            <person name="Herb A."/>
            <person name="Pritchett D.B."/>
            <person name="Bach A."/>
            <person name="Shivers B.D."/>
            <person name="Seeburg P.H."/>
        </authorList>
    </citation>
    <scope>NUCLEOTIDE SEQUENCE [MRNA] (ISOFORM LONG)</scope>
    <scope>TISSUE SPECIFICITY</scope>
</reference>
<reference key="3">
    <citation type="journal article" date="1989" name="Nature">
        <title>D2 receptor, a missing exon.</title>
        <authorList>
            <person name="Eidne K.A."/>
            <person name="Taylor P.L."/>
            <person name="Zabavnik J."/>
            <person name="Saunders P.T.K."/>
            <person name="Inglis J.D."/>
        </authorList>
    </citation>
    <scope>NUCLEOTIDE SEQUENCE [MRNA]</scope>
</reference>
<reference key="4">
    <citation type="journal article" date="1989" name="Nature">
        <title>Alternative splicing directs the expression of two D2 dopamine receptor isoforms.</title>
        <authorList>
            <person name="Giros B."/>
            <person name="Sokoloff P."/>
            <person name="Martres M.-P."/>
            <person name="Riou J.-F."/>
            <person name="Emorine L.J."/>
            <person name="Schwartz J.-C."/>
        </authorList>
    </citation>
    <scope>NUCLEOTIDE SEQUENCE [MRNA]</scope>
</reference>
<reference key="5">
    <citation type="journal article" date="1989" name="Nature">
        <title>Multiple D2 dopamine receptors produced by alternative RNA splicing.</title>
        <authorList>
            <person name="Monsma F.J. Jr."/>
            <person name="McVittie L.D."/>
            <person name="Gerfen C.R."/>
            <person name="Mahan L.C."/>
            <person name="Sibley D.R."/>
        </authorList>
    </citation>
    <scope>NUCLEOTIDE SEQUENCE [MRNA]</scope>
</reference>
<reference key="6">
    <citation type="journal article" date="1990" name="FEBS Lett.">
        <title>Two forms of the rat D2 dopamine receptor as revealed by the polymerase chain reaction.</title>
        <authorList>
            <person name="Rao D.D."/>
            <person name="McKelvy J."/>
            <person name="Kebabian J."/>
            <person name="MacKenzie R.G."/>
        </authorList>
    </citation>
    <scope>NUCLEOTIDE SEQUENCE [MRNA]</scope>
</reference>
<reference key="7">
    <citation type="submission" date="1990-10" db="EMBL/GenBank/DDBJ databases">
        <title>5'untranslated region of rat pituitary dopamine D2(B) receptor contains a putative CpG island.</title>
        <authorList>
            <person name="Taylor P.L."/>
            <person name="Inglis J.D."/>
            <person name="Eidne K.A."/>
        </authorList>
    </citation>
    <scope>NUCLEOTIDE SEQUENCE [MRNA] (ISOFORM LONG)</scope>
    <source>
        <strain>Sprague-Dawley</strain>
    </source>
</reference>
<reference key="8">
    <citation type="journal article" date="1990" name="Biochem. Biophys. Res. Commun.">
        <title>Identification by sequence analysis of a second rat brain cDNA encoding the dopamine (D2) receptor.</title>
        <authorList>
            <person name="Miller J.C."/>
            <person name="Wang Y."/>
            <person name="Filer D."/>
        </authorList>
    </citation>
    <scope>NUCLEOTIDE SEQUENCE [MRNA] OF 242-270</scope>
</reference>
<reference key="9">
    <citation type="journal article" date="1990" name="FEBS Lett.">
        <title>Cloning of two additional catecholamine receptors from rat brain.</title>
        <authorList>
            <person name="O'Dowd B.F."/>
            <person name="Nguyen T."/>
            <person name="Tirpak A."/>
            <person name="Jarvie K.R."/>
            <person name="Israel Y."/>
            <person name="Seeman P."/>
            <person name="Niznik H.B."/>
        </authorList>
    </citation>
    <scope>NUCLEOTIDE SEQUENCE [MRNA] OF 242-270</scope>
</reference>
<reference key="10">
    <citation type="journal article" date="1990" name="Nature">
        <title>A second molecular form of D2 dopamine receptor in rat and bovine caudate nucleus.</title>
        <authorList>
            <person name="Chio C.L."/>
            <person name="Hess G.F."/>
            <person name="Graham R.S."/>
            <person name="Huff R.M."/>
        </authorList>
    </citation>
    <scope>NUCLEOTIDE SEQUENCE [MRNA] (ISOFORM LONG)</scope>
    <scope>TISSUE SPECIFICITY</scope>
</reference>
<reference key="11">
    <citation type="journal article" date="1992" name="J. Neurochem.">
        <title>Contributions of conserved serine residues to the interactions of ligands with dopamine D2 receptors.</title>
        <authorList>
            <person name="Cox B.A."/>
            <person name="Henningsen R.A."/>
            <person name="Spanoyannis A."/>
            <person name="Neve R.L."/>
            <person name="Neve K.A."/>
        </authorList>
    </citation>
    <scope>FUNCTION</scope>
    <scope>MUTAGENESIS OF SER-193; SER-194; SER-197 AND SER-420</scope>
</reference>
<reference key="12">
    <citation type="journal article" date="1999" name="J. Biol. Chem.">
        <title>Association of the D2 dopamine receptor third cytoplasmic loop with spinophilin, a protein phosphatase-1-interacting protein.</title>
        <authorList>
            <person name="Smith F.D."/>
            <person name="Oxford G.S."/>
            <person name="Milgram S.L."/>
        </authorList>
    </citation>
    <scope>INTERACTION WITH PPP1R9B</scope>
</reference>
<reference key="13">
    <citation type="journal article" date="2003" name="Brain Res. Mol. Brain Res.">
        <title>CLIC6, a member of the intracellular chloride channel family, interacts with dopamine D(2)-like receptors.</title>
        <authorList>
            <person name="Griffon N."/>
            <person name="Jeanneteau F."/>
            <person name="Prieur F."/>
            <person name="Diaz J."/>
            <person name="Sokoloff P."/>
        </authorList>
    </citation>
    <scope>INTERACTION WITH CLIC6</scope>
</reference>
<reference key="14">
    <citation type="journal article" date="2005" name="Proc. Natl. Acad. Sci. U.S.A.">
        <title>Dopamine responsiveness is regulated by targeted sorting of D2 receptors.</title>
        <authorList>
            <person name="Bartlett S.E."/>
            <person name="Enquist J."/>
            <person name="Hopf F.W."/>
            <person name="Lee J.H."/>
            <person name="Gladher F."/>
            <person name="Kharazia V."/>
            <person name="Waldhoer M."/>
            <person name="Mailliard W.S."/>
            <person name="Armstrong R."/>
            <person name="Bonci A."/>
            <person name="Whistler J.L."/>
        </authorList>
    </citation>
    <scope>INTERACTION WITH GPRASP1</scope>
</reference>
<reference key="15">
    <citation type="journal article" date="2009" name="J. Biol. Chem.">
        <title>G protein-coupled receptor kinase-mediated phosphorylation regulates post-endocytic trafficking of the D2 dopamine receptor.</title>
        <authorList>
            <person name="Namkung Y."/>
            <person name="Dipace C."/>
            <person name="Javitch J.A."/>
            <person name="Sibley D.R."/>
        </authorList>
    </citation>
    <scope>INTERACTION WITH ARRB2</scope>
</reference>
<reference key="16">
    <citation type="journal article" date="1992" name="Biochem. J.">
        <title>Molecular modelling of D2-like dopamine receptors.</title>
        <authorList>
            <person name="Livingstone C.D."/>
            <person name="Strange P.G."/>
            <person name="Naylor L.H."/>
        </authorList>
    </citation>
    <scope>3D-STRUCTURE MODELING</scope>
</reference>
<comment type="function">
    <text evidence="3 8">Dopamine receptor whose activity is mediated by G proteins which inhibit adenylyl cyclase (PubMed:1321233). Positively regulates postnatal regression of retinal hyaloid vessels via suppression of VEGFR2/KDR activity, downstream of OPN5 (By similarity).</text>
</comment>
<comment type="subunit">
    <text evidence="2 3">Forms homo- and heterooligomers with DRD4 (By similarity). The interaction with DRD4 may modulate agonist-induced downstream signaling (By similarity). Interacts with CADPS and CADPS2 (By similarity). Interacts with GPRASP1, PPP1R9B and CLIC6 (PubMed:10391935, PubMed:14499480, PubMed:16049099). Interacts with ARRB2 (PubMed:19332542). Interacts with HTR2A (By similarity). Interacts with DRD1 (By similarity). Interacts with KCNA2 (By similarity).</text>
</comment>
<comment type="interaction">
    <interactant intactId="EBI-80012">
        <id>P61169</id>
    </interactant>
    <interactant intactId="EBI-80022">
        <id>O35274</id>
        <label>Ppp1r9b</label>
    </interactant>
    <organismsDiffer>false</organismsDiffer>
    <experiments>2</experiments>
</comment>
<comment type="subcellular location">
    <subcellularLocation>
        <location evidence="2">Cell membrane</location>
        <topology evidence="4">Multi-pass membrane protein</topology>
    </subcellularLocation>
    <subcellularLocation>
        <location evidence="2">Golgi apparatus membrane</location>
        <topology evidence="4">Multi-pass membrane protein</topology>
    </subcellularLocation>
</comment>
<comment type="alternative products">
    <event type="alternative splicing"/>
    <isoform>
        <id>P61169-1</id>
        <id>P13953-1</id>
        <name>Long</name>
        <name>D2A</name>
        <name>D2in</name>
        <sequence type="displayed"/>
    </isoform>
    <isoform>
        <id>P61169-2</id>
        <id>P13953-2</id>
        <name>Short</name>
        <name>D2B</name>
        <name>D2o</name>
        <sequence type="described" ref="VSP_001871"/>
    </isoform>
</comment>
<comment type="tissue specificity">
    <molecule>Isoform Long</molecule>
    <text evidence="9 10">Expressed in the anterior lobe of the pituitary gland (PubMed:2531656). Expressed ventral tegmental area of the midbrain and the pars compacta of the substantia nigra (PubMed:2531656). Expressed seven times more than isoform short in the caudate nucleus (PubMed:2137198).</text>
</comment>
<comment type="tissue specificity">
    <molecule>Isoform Short</molecule>
    <text evidence="9 10">Expressed in the anterior lobe of the pituitary gland (PubMed:2531656). Expressed in the caudate nucleus (PubMed:2137198). Not expressed in the wider brain (PubMed:2531656).</text>
</comment>
<comment type="PTM">
    <text evidence="2">Palmitoylated. Palmitoylation which is required for proper localization to the plasma membrane and stability of the receptor could be carried on by ZDHHC4, ZDHHC3 and ZDHHC8.</text>
</comment>
<comment type="similarity">
    <text evidence="5">Belongs to the G-protein coupled receptor 1 family.</text>
</comment>
<keyword id="KW-0025">Alternative splicing</keyword>
<keyword id="KW-1003">Cell membrane</keyword>
<keyword id="KW-1015">Disulfide bond</keyword>
<keyword id="KW-0297">G-protein coupled receptor</keyword>
<keyword id="KW-0325">Glycoprotein</keyword>
<keyword id="KW-0333">Golgi apparatus</keyword>
<keyword id="KW-0449">Lipoprotein</keyword>
<keyword id="KW-0472">Membrane</keyword>
<keyword id="KW-0564">Palmitate</keyword>
<keyword id="KW-0675">Receptor</keyword>
<keyword id="KW-1185">Reference proteome</keyword>
<keyword id="KW-0807">Transducer</keyword>
<keyword id="KW-0812">Transmembrane</keyword>
<keyword id="KW-1133">Transmembrane helix</keyword>
<feature type="chain" id="PRO_0000069390" description="D(2) dopamine receptor">
    <location>
        <begin position="1"/>
        <end position="444"/>
    </location>
</feature>
<feature type="topological domain" description="Extracellular" evidence="1">
    <location>
        <begin position="1"/>
        <end position="37"/>
    </location>
</feature>
<feature type="transmembrane region" description="Helical; Name=1" evidence="1">
    <location>
        <begin position="38"/>
        <end position="60"/>
    </location>
</feature>
<feature type="topological domain" description="Cytoplasmic" evidence="1">
    <location>
        <begin position="61"/>
        <end position="70"/>
    </location>
</feature>
<feature type="transmembrane region" description="Helical; Name=2" evidence="1">
    <location>
        <begin position="71"/>
        <end position="93"/>
    </location>
</feature>
<feature type="topological domain" description="Extracellular" evidence="1">
    <location>
        <begin position="94"/>
        <end position="108"/>
    </location>
</feature>
<feature type="transmembrane region" description="Helical; Name=3" evidence="1">
    <location>
        <begin position="109"/>
        <end position="130"/>
    </location>
</feature>
<feature type="topological domain" description="Cytoplasmic" evidence="1">
    <location>
        <begin position="131"/>
        <end position="151"/>
    </location>
</feature>
<feature type="transmembrane region" description="Helical; Name=4" evidence="1">
    <location>
        <begin position="152"/>
        <end position="172"/>
    </location>
</feature>
<feature type="topological domain" description="Extracellular" evidence="1">
    <location>
        <begin position="173"/>
        <end position="188"/>
    </location>
</feature>
<feature type="transmembrane region" description="Helical; Name=5" evidence="1">
    <location>
        <begin position="189"/>
        <end position="213"/>
    </location>
</feature>
<feature type="topological domain" description="Cytoplasmic" evidence="1">
    <location>
        <begin position="214"/>
        <end position="374"/>
    </location>
</feature>
<feature type="transmembrane region" description="Helical; Name=6" evidence="1">
    <location>
        <begin position="375"/>
        <end position="396"/>
    </location>
</feature>
<feature type="topological domain" description="Extracellular" evidence="1">
    <location>
        <begin position="397"/>
        <end position="410"/>
    </location>
</feature>
<feature type="transmembrane region" description="Helical; Name=7" evidence="1">
    <location>
        <begin position="411"/>
        <end position="432"/>
    </location>
</feature>
<feature type="topological domain" description="Cytoplasmic" evidence="1">
    <location>
        <begin position="433"/>
        <end position="444"/>
    </location>
</feature>
<feature type="region of interest" description="Interaction with PPP1R9B" evidence="7">
    <location>
        <begin position="211"/>
        <end position="374"/>
    </location>
</feature>
<feature type="region of interest" description="Disordered" evidence="6">
    <location>
        <begin position="282"/>
        <end position="329"/>
    </location>
</feature>
<feature type="site" description="Important for receptor activation">
    <location>
        <position position="194"/>
    </location>
</feature>
<feature type="site" description="Important for receptor activation">
    <location>
        <position position="197"/>
    </location>
</feature>
<feature type="lipid moiety-binding region" description="S-palmitoyl cysteine" evidence="2">
    <location>
        <position position="444"/>
    </location>
</feature>
<feature type="glycosylation site" description="N-linked (GlcNAc...) asparagine" evidence="4">
    <location>
        <position position="5"/>
    </location>
</feature>
<feature type="glycosylation site" description="N-linked (GlcNAc...) asparagine" evidence="4">
    <location>
        <position position="17"/>
    </location>
</feature>
<feature type="glycosylation site" description="N-linked (GlcNAc...) asparagine" evidence="4">
    <location>
        <position position="23"/>
    </location>
</feature>
<feature type="disulfide bond" evidence="5">
    <location>
        <begin position="107"/>
        <end position="182"/>
    </location>
</feature>
<feature type="disulfide bond" evidence="5">
    <location>
        <begin position="400"/>
        <end position="402"/>
    </location>
</feature>
<feature type="splice variant" id="VSP_001871" description="In isoform Short." evidence="11">
    <location>
        <begin position="242"/>
        <end position="270"/>
    </location>
</feature>
<feature type="mutagenesis site" description="Moderate decrease in ligand binding. 200-fold reduction of agonist-mediated cAMP inhibition." evidence="8">
    <original>S</original>
    <variation>A</variation>
    <location>
        <position position="193"/>
    </location>
</feature>
<feature type="mutagenesis site" description="Small decrease in agonist binding. Complete loss of agonist-mediated cAMP inhibition." evidence="8">
    <original>S</original>
    <variation>A</variation>
    <location>
        <position position="194"/>
    </location>
</feature>
<feature type="mutagenesis site" description="Small decrease in agonist binding. 18-fold reduction of agonist-mediated cAMP inhibition." evidence="8">
    <original>S</original>
    <variation>A</variation>
    <location>
        <position position="197"/>
    </location>
</feature>
<feature type="mutagenesis site" description="Moderate decrease in ligand binding." evidence="8">
    <original>S</original>
    <variation>A</variation>
    <location>
        <position position="420"/>
    </location>
</feature>
<feature type="sequence conflict" description="In Ref. 6; CAA37373." evidence="12" ref="6">
    <original>E</original>
    <variation>D</variation>
    <location>
        <position position="99"/>
    </location>
</feature>
<feature type="sequence conflict" description="In Ref. 6; CAA37373." evidence="12" ref="6">
    <original>G</original>
    <variation>R</variation>
    <location>
        <position position="173"/>
    </location>
</feature>
<feature type="sequence conflict" description="In Ref. 6; CAA37373." evidence="12" ref="6">
    <original>N</original>
    <variation>G</variation>
    <location>
        <position position="180"/>
    </location>
</feature>
<name>DRD2_RAT</name>
<dbReference type="EMBL" id="M36831">
    <property type="protein sequence ID" value="AAA41075.1"/>
    <property type="molecule type" value="mRNA"/>
</dbReference>
<dbReference type="EMBL" id="X53278">
    <property type="protein sequence ID" value="CAA37373.1"/>
    <property type="molecule type" value="mRNA"/>
</dbReference>
<dbReference type="EMBL" id="X56065">
    <property type="protein sequence ID" value="CAA39543.1"/>
    <property type="molecule type" value="mRNA"/>
</dbReference>
<dbReference type="EMBL" id="M32241">
    <property type="protein sequence ID" value="AAA41074.1"/>
    <property type="molecule type" value="mRNA"/>
</dbReference>
<dbReference type="PIR" id="S08146">
    <property type="entry name" value="S08146"/>
</dbReference>
<dbReference type="RefSeq" id="NP_001396308.1">
    <molecule id="P61169-2"/>
    <property type="nucleotide sequence ID" value="NM_001409379.1"/>
</dbReference>
<dbReference type="RefSeq" id="NP_036679.1">
    <molecule id="P61169-1"/>
    <property type="nucleotide sequence ID" value="NM_012547.3"/>
</dbReference>
<dbReference type="RefSeq" id="XP_006243041.1">
    <property type="nucleotide sequence ID" value="XM_006242979.3"/>
</dbReference>
<dbReference type="SMR" id="P61169"/>
<dbReference type="BioGRID" id="246498">
    <property type="interactions" value="11"/>
</dbReference>
<dbReference type="CORUM" id="P61169"/>
<dbReference type="DIP" id="DIP-30883N"/>
<dbReference type="FunCoup" id="P61169">
    <property type="interactions" value="331"/>
</dbReference>
<dbReference type="IntAct" id="P61169">
    <property type="interactions" value="5"/>
</dbReference>
<dbReference type="MINT" id="P61169"/>
<dbReference type="STRING" id="10116.ENSRNOP00000043759"/>
<dbReference type="BindingDB" id="P61169"/>
<dbReference type="ChEMBL" id="CHEMBL339"/>
<dbReference type="DrugCentral" id="P61169"/>
<dbReference type="GuidetoPHARMACOLOGY" id="215"/>
<dbReference type="GlyCosmos" id="P61169">
    <property type="glycosylation" value="3 sites, No reported glycans"/>
</dbReference>
<dbReference type="GlyGen" id="P61169">
    <property type="glycosylation" value="3 sites"/>
</dbReference>
<dbReference type="iPTMnet" id="P61169"/>
<dbReference type="MetOSite" id="P61169"/>
<dbReference type="PhosphoSitePlus" id="P61169"/>
<dbReference type="PaxDb" id="10116-ENSRNOP00000043759"/>
<dbReference type="ABCD" id="P61169">
    <property type="antibodies" value="1 sequenced antibody"/>
</dbReference>
<dbReference type="Ensembl" id="ENSRNOT00000045944.6">
    <molecule id="P61169-1"/>
    <property type="protein sequence ID" value="ENSRNOP00000043759.4"/>
    <property type="gene ID" value="ENSRNOG00000008428.8"/>
</dbReference>
<dbReference type="Ensembl" id="ENSRNOT00000083419.2">
    <molecule id="P61169-2"/>
    <property type="protein sequence ID" value="ENSRNOP00000074235.1"/>
    <property type="gene ID" value="ENSRNOG00000008428.8"/>
</dbReference>
<dbReference type="GeneID" id="24318"/>
<dbReference type="KEGG" id="rno:24318"/>
<dbReference type="UCSC" id="RGD:2520">
    <property type="organism name" value="rat"/>
</dbReference>
<dbReference type="AGR" id="RGD:2520"/>
<dbReference type="CTD" id="1813"/>
<dbReference type="RGD" id="2520">
    <property type="gene designation" value="Drd2"/>
</dbReference>
<dbReference type="eggNOG" id="KOG3656">
    <property type="taxonomic scope" value="Eukaryota"/>
</dbReference>
<dbReference type="GeneTree" id="ENSGT00940000155539"/>
<dbReference type="InParanoid" id="P61169"/>
<dbReference type="OMA" id="TPLKGNC"/>
<dbReference type="OrthoDB" id="10034726at2759"/>
<dbReference type="PhylomeDB" id="P61169"/>
<dbReference type="TreeFam" id="TF334382"/>
<dbReference type="Reactome" id="R-RNO-390651">
    <property type="pathway name" value="Dopamine receptors"/>
</dbReference>
<dbReference type="PRO" id="PR:P61169"/>
<dbReference type="Proteomes" id="UP000002494">
    <property type="component" value="Chromosome 8"/>
</dbReference>
<dbReference type="Bgee" id="ENSRNOG00000008428">
    <property type="expression patterns" value="Expressed in cerebellum and 1 other cell type or tissue"/>
</dbReference>
<dbReference type="GO" id="GO:0001669">
    <property type="term" value="C:acrosomal vesicle"/>
    <property type="evidence" value="ECO:0000314"/>
    <property type="project" value="RGD"/>
</dbReference>
<dbReference type="GO" id="GO:0030424">
    <property type="term" value="C:axon"/>
    <property type="evidence" value="ECO:0000314"/>
    <property type="project" value="RGD"/>
</dbReference>
<dbReference type="GO" id="GO:0043679">
    <property type="term" value="C:axon terminus"/>
    <property type="evidence" value="ECO:0000314"/>
    <property type="project" value="RGD"/>
</dbReference>
<dbReference type="GO" id="GO:0060170">
    <property type="term" value="C:ciliary membrane"/>
    <property type="evidence" value="ECO:0000266"/>
    <property type="project" value="RGD"/>
</dbReference>
<dbReference type="GO" id="GO:0005929">
    <property type="term" value="C:cilium"/>
    <property type="evidence" value="ECO:0000266"/>
    <property type="project" value="RGD"/>
</dbReference>
<dbReference type="GO" id="GO:0030425">
    <property type="term" value="C:dendrite"/>
    <property type="evidence" value="ECO:0000314"/>
    <property type="project" value="RGD"/>
</dbReference>
<dbReference type="GO" id="GO:0043197">
    <property type="term" value="C:dendritic spine"/>
    <property type="evidence" value="ECO:0000314"/>
    <property type="project" value="RGD"/>
</dbReference>
<dbReference type="GO" id="GO:0098691">
    <property type="term" value="C:dopaminergic synapse"/>
    <property type="evidence" value="ECO:0000266"/>
    <property type="project" value="RGD"/>
</dbReference>
<dbReference type="GO" id="GO:0030139">
    <property type="term" value="C:endocytic vesicle"/>
    <property type="evidence" value="ECO:0000314"/>
    <property type="project" value="RGD"/>
</dbReference>
<dbReference type="GO" id="GO:0097648">
    <property type="term" value="C:G protein-coupled receptor complex"/>
    <property type="evidence" value="ECO:0000266"/>
    <property type="project" value="RGD"/>
</dbReference>
<dbReference type="GO" id="GO:0098982">
    <property type="term" value="C:GABA-ergic synapse"/>
    <property type="evidence" value="ECO:0000314"/>
    <property type="project" value="SynGO"/>
</dbReference>
<dbReference type="GO" id="GO:0098978">
    <property type="term" value="C:glutamatergic synapse"/>
    <property type="evidence" value="ECO:0000314"/>
    <property type="project" value="SynGO"/>
</dbReference>
<dbReference type="GO" id="GO:0000139">
    <property type="term" value="C:Golgi membrane"/>
    <property type="evidence" value="ECO:0007669"/>
    <property type="project" value="UniProtKB-SubCell"/>
</dbReference>
<dbReference type="GO" id="GO:0016328">
    <property type="term" value="C:lateral plasma membrane"/>
    <property type="evidence" value="ECO:0000314"/>
    <property type="project" value="RGD"/>
</dbReference>
<dbReference type="GO" id="GO:0016020">
    <property type="term" value="C:membrane"/>
    <property type="evidence" value="ECO:0000314"/>
    <property type="project" value="BHF-UCL"/>
</dbReference>
<dbReference type="GO" id="GO:0097730">
    <property type="term" value="C:non-motile cilium"/>
    <property type="evidence" value="ECO:0000266"/>
    <property type="project" value="RGD"/>
</dbReference>
<dbReference type="GO" id="GO:0043204">
    <property type="term" value="C:perikaryon"/>
    <property type="evidence" value="ECO:0000314"/>
    <property type="project" value="RGD"/>
</dbReference>
<dbReference type="GO" id="GO:0005886">
    <property type="term" value="C:plasma membrane"/>
    <property type="evidence" value="ECO:0000266"/>
    <property type="project" value="RGD"/>
</dbReference>
<dbReference type="GO" id="GO:0045211">
    <property type="term" value="C:postsynaptic membrane"/>
    <property type="evidence" value="ECO:0000314"/>
    <property type="project" value="SynGO"/>
</dbReference>
<dbReference type="GO" id="GO:0042734">
    <property type="term" value="C:presynaptic membrane"/>
    <property type="evidence" value="ECO:0000314"/>
    <property type="project" value="SynGO"/>
</dbReference>
<dbReference type="GO" id="GO:0036126">
    <property type="term" value="C:sperm flagellum"/>
    <property type="evidence" value="ECO:0000314"/>
    <property type="project" value="RGD"/>
</dbReference>
<dbReference type="GO" id="GO:0030672">
    <property type="term" value="C:synaptic vesicle membrane"/>
    <property type="evidence" value="ECO:0000314"/>
    <property type="project" value="RGD"/>
</dbReference>
<dbReference type="GO" id="GO:0035240">
    <property type="term" value="F:dopamine binding"/>
    <property type="evidence" value="ECO:0000315"/>
    <property type="project" value="RGD"/>
</dbReference>
<dbReference type="GO" id="GO:0004952">
    <property type="term" value="F:dopamine neurotransmitter receptor activity"/>
    <property type="evidence" value="ECO:0000266"/>
    <property type="project" value="RGD"/>
</dbReference>
<dbReference type="GO" id="GO:0001591">
    <property type="term" value="F:dopamine neurotransmitter receptor activity, coupled via Gi/Go"/>
    <property type="evidence" value="ECO:0000314"/>
    <property type="project" value="BHF-UCL"/>
</dbReference>
<dbReference type="GO" id="GO:0004930">
    <property type="term" value="F:G protein-coupled receptor activity"/>
    <property type="evidence" value="ECO:0000266"/>
    <property type="project" value="RGD"/>
</dbReference>
<dbReference type="GO" id="GO:0001965">
    <property type="term" value="F:G-protein alpha-subunit binding"/>
    <property type="evidence" value="ECO:0000266"/>
    <property type="project" value="RGD"/>
</dbReference>
<dbReference type="GO" id="GO:0032795">
    <property type="term" value="F:heterotrimeric G-protein binding"/>
    <property type="evidence" value="ECO:0000266"/>
    <property type="project" value="RGD"/>
</dbReference>
<dbReference type="GO" id="GO:0042802">
    <property type="term" value="F:identical protein binding"/>
    <property type="evidence" value="ECO:0000353"/>
    <property type="project" value="RGD"/>
</dbReference>
<dbReference type="GO" id="GO:0035255">
    <property type="term" value="F:ionotropic glutamate receptor binding"/>
    <property type="evidence" value="ECO:0000353"/>
    <property type="project" value="RGD"/>
</dbReference>
<dbReference type="GO" id="GO:0044877">
    <property type="term" value="F:protein-containing complex binding"/>
    <property type="evidence" value="ECO:0000353"/>
    <property type="project" value="RGD"/>
</dbReference>
<dbReference type="GO" id="GO:0005102">
    <property type="term" value="F:signaling receptor binding"/>
    <property type="evidence" value="ECO:0000353"/>
    <property type="project" value="RGD"/>
</dbReference>
<dbReference type="GO" id="GO:0046717">
    <property type="term" value="P:acid secretion"/>
    <property type="evidence" value="ECO:0000314"/>
    <property type="project" value="BHF-UCL"/>
</dbReference>
<dbReference type="GO" id="GO:0021984">
    <property type="term" value="P:adenohypophysis development"/>
    <property type="evidence" value="ECO:0000266"/>
    <property type="project" value="RGD"/>
</dbReference>
<dbReference type="GO" id="GO:0007195">
    <property type="term" value="P:adenylate cyclase-inhibiting dopamine receptor signaling pathway"/>
    <property type="evidence" value="ECO:0000314"/>
    <property type="project" value="BHF-UCL"/>
</dbReference>
<dbReference type="GO" id="GO:0007188">
    <property type="term" value="P:adenylate cyclase-modulating G protein-coupled receptor signaling pathway"/>
    <property type="evidence" value="ECO:0000314"/>
    <property type="project" value="RGD"/>
</dbReference>
<dbReference type="GO" id="GO:0030534">
    <property type="term" value="P:adult behavior"/>
    <property type="evidence" value="ECO:0000266"/>
    <property type="project" value="RGD"/>
</dbReference>
<dbReference type="GO" id="GO:0007628">
    <property type="term" value="P:adult walking behavior"/>
    <property type="evidence" value="ECO:0000266"/>
    <property type="project" value="RGD"/>
</dbReference>
<dbReference type="GO" id="GO:0050482">
    <property type="term" value="P:arachidonate secretion"/>
    <property type="evidence" value="ECO:0000266"/>
    <property type="project" value="RGD"/>
</dbReference>
<dbReference type="GO" id="GO:0008306">
    <property type="term" value="P:associative learning"/>
    <property type="evidence" value="ECO:0000266"/>
    <property type="project" value="RGD"/>
</dbReference>
<dbReference type="GO" id="GO:0031223">
    <property type="term" value="P:auditory behavior"/>
    <property type="evidence" value="ECO:0000315"/>
    <property type="project" value="RGD"/>
</dbReference>
<dbReference type="GO" id="GO:0006914">
    <property type="term" value="P:autophagy"/>
    <property type="evidence" value="ECO:0000314"/>
    <property type="project" value="RGD"/>
</dbReference>
<dbReference type="GO" id="GO:0007409">
    <property type="term" value="P:axonogenesis"/>
    <property type="evidence" value="ECO:0000266"/>
    <property type="project" value="RGD"/>
</dbReference>
<dbReference type="GO" id="GO:0048148">
    <property type="term" value="P:behavioral response to cocaine"/>
    <property type="evidence" value="ECO:0000266"/>
    <property type="project" value="RGD"/>
</dbReference>
<dbReference type="GO" id="GO:0048149">
    <property type="term" value="P:behavioral response to ethanol"/>
    <property type="evidence" value="ECO:0000266"/>
    <property type="project" value="RGD"/>
</dbReference>
<dbReference type="GO" id="GO:0048755">
    <property type="term" value="P:branching morphogenesis of a nerve"/>
    <property type="evidence" value="ECO:0000266"/>
    <property type="project" value="RGD"/>
</dbReference>
<dbReference type="GO" id="GO:0016477">
    <property type="term" value="P:cell migration"/>
    <property type="evidence" value="ECO:0000266"/>
    <property type="project" value="RGD"/>
</dbReference>
<dbReference type="GO" id="GO:0008283">
    <property type="term" value="P:cell population proliferation"/>
    <property type="evidence" value="ECO:0000266"/>
    <property type="project" value="RGD"/>
</dbReference>
<dbReference type="GO" id="GO:0071361">
    <property type="term" value="P:cellular response to ethanol"/>
    <property type="evidence" value="ECO:0000270"/>
    <property type="project" value="RGD"/>
</dbReference>
<dbReference type="GO" id="GO:0071300">
    <property type="term" value="P:cellular response to retinoic acid"/>
    <property type="evidence" value="ECO:0000270"/>
    <property type="project" value="RGD"/>
</dbReference>
<dbReference type="GO" id="GO:0021853">
    <property type="term" value="P:cerebral cortex GABAergic interneuron migration"/>
    <property type="evidence" value="ECO:0000266"/>
    <property type="project" value="RGD"/>
</dbReference>
<dbReference type="GO" id="GO:0032922">
    <property type="term" value="P:circadian regulation of gene expression"/>
    <property type="evidence" value="ECO:0000266"/>
    <property type="project" value="RGD"/>
</dbReference>
<dbReference type="GO" id="GO:0042417">
    <property type="term" value="P:dopamine metabolic process"/>
    <property type="evidence" value="ECO:0000266"/>
    <property type="project" value="RGD"/>
</dbReference>
<dbReference type="GO" id="GO:0051583">
    <property type="term" value="P:dopamine uptake involved in synaptic transmission"/>
    <property type="evidence" value="ECO:0000266"/>
    <property type="project" value="RGD"/>
</dbReference>
<dbReference type="GO" id="GO:0042756">
    <property type="term" value="P:drinking behavior"/>
    <property type="evidence" value="ECO:0000314"/>
    <property type="project" value="RGD"/>
</dbReference>
<dbReference type="GO" id="GO:0050673">
    <property type="term" value="P:epithelial cell proliferation"/>
    <property type="evidence" value="ECO:0000266"/>
    <property type="project" value="RGD"/>
</dbReference>
<dbReference type="GO" id="GO:0007631">
    <property type="term" value="P:feeding behavior"/>
    <property type="evidence" value="ECO:0000266"/>
    <property type="project" value="RGD"/>
</dbReference>
<dbReference type="GO" id="GO:0030900">
    <property type="term" value="P:forebrain development"/>
    <property type="evidence" value="ECO:0000315"/>
    <property type="project" value="RGD"/>
</dbReference>
<dbReference type="GO" id="GO:0007212">
    <property type="term" value="P:G protein-coupled dopamine receptor signaling pathway"/>
    <property type="evidence" value="ECO:0000314"/>
    <property type="project" value="RGD"/>
</dbReference>
<dbReference type="GO" id="GO:0002031">
    <property type="term" value="P:G protein-coupled receptor internalization"/>
    <property type="evidence" value="ECO:0000314"/>
    <property type="project" value="RGD"/>
</dbReference>
<dbReference type="GO" id="GO:0007186">
    <property type="term" value="P:G protein-coupled receptor signaling pathway"/>
    <property type="evidence" value="ECO:0000266"/>
    <property type="project" value="RGD"/>
</dbReference>
<dbReference type="GO" id="GO:0007625">
    <property type="term" value="P:grooming behavior"/>
    <property type="evidence" value="ECO:0000266"/>
    <property type="project" value="RGD"/>
</dbReference>
<dbReference type="GO" id="GO:1990384">
    <property type="term" value="P:hyaloid vascular plexus regression"/>
    <property type="evidence" value="ECO:0000250"/>
    <property type="project" value="UniProtKB"/>
</dbReference>
<dbReference type="GO" id="GO:0030007">
    <property type="term" value="P:intracellular potassium ion homeostasis"/>
    <property type="evidence" value="ECO:0000305"/>
    <property type="project" value="BHF-UCL"/>
</dbReference>
<dbReference type="GO" id="GO:0035556">
    <property type="term" value="P:intracellular signal transduction"/>
    <property type="evidence" value="ECO:0000266"/>
    <property type="project" value="RGD"/>
</dbReference>
<dbReference type="GO" id="GO:0007626">
    <property type="term" value="P:locomotory behavior"/>
    <property type="evidence" value="ECO:0000315"/>
    <property type="project" value="RGD"/>
</dbReference>
<dbReference type="GO" id="GO:0007616">
    <property type="term" value="P:long-term memory"/>
    <property type="evidence" value="ECO:0000315"/>
    <property type="project" value="RGD"/>
</dbReference>
<dbReference type="GO" id="GO:0050804">
    <property type="term" value="P:modulation of chemical synaptic transmission"/>
    <property type="evidence" value="ECO:0000266"/>
    <property type="project" value="RGD"/>
</dbReference>
<dbReference type="GO" id="GO:0045776">
    <property type="term" value="P:negative regulation of blood pressure"/>
    <property type="evidence" value="ECO:0000266"/>
    <property type="project" value="RGD"/>
</dbReference>
<dbReference type="GO" id="GO:0008285">
    <property type="term" value="P:negative regulation of cell population proliferation"/>
    <property type="evidence" value="ECO:0000266"/>
    <property type="project" value="RGD"/>
</dbReference>
<dbReference type="GO" id="GO:1900038">
    <property type="term" value="P:negative regulation of cellular response to hypoxia"/>
    <property type="evidence" value="ECO:0000315"/>
    <property type="project" value="RGD"/>
</dbReference>
<dbReference type="GO" id="GO:0042321">
    <property type="term" value="P:negative regulation of circadian sleep/wake cycle, sleep"/>
    <property type="evidence" value="ECO:0000314"/>
    <property type="project" value="RGD"/>
</dbReference>
<dbReference type="GO" id="GO:0051481">
    <property type="term" value="P:negative regulation of cytosolic calcium ion concentration"/>
    <property type="evidence" value="ECO:0000315"/>
    <property type="project" value="RGD"/>
</dbReference>
<dbReference type="GO" id="GO:0035305">
    <property type="term" value="P:negative regulation of dephosphorylation"/>
    <property type="evidence" value="ECO:0000314"/>
    <property type="project" value="RGD"/>
</dbReference>
<dbReference type="GO" id="GO:0060160">
    <property type="term" value="P:negative regulation of dopamine receptor signaling pathway"/>
    <property type="evidence" value="ECO:0000266"/>
    <property type="project" value="RGD"/>
</dbReference>
<dbReference type="GO" id="GO:0033602">
    <property type="term" value="P:negative regulation of dopamine secretion"/>
    <property type="evidence" value="ECO:0000315"/>
    <property type="project" value="RGD"/>
</dbReference>
<dbReference type="GO" id="GO:0050680">
    <property type="term" value="P:negative regulation of epithelial cell proliferation"/>
    <property type="evidence" value="ECO:0000266"/>
    <property type="project" value="RGD"/>
</dbReference>
<dbReference type="GO" id="GO:0045824">
    <property type="term" value="P:negative regulation of innate immune response"/>
    <property type="evidence" value="ECO:0000266"/>
    <property type="project" value="RGD"/>
</dbReference>
<dbReference type="GO" id="GO:0046676">
    <property type="term" value="P:negative regulation of insulin secretion"/>
    <property type="evidence" value="ECO:0000315"/>
    <property type="project" value="RGD"/>
</dbReference>
<dbReference type="GO" id="GO:2001223">
    <property type="term" value="P:negative regulation of neuron migration"/>
    <property type="evidence" value="ECO:0000266"/>
    <property type="project" value="RGD"/>
</dbReference>
<dbReference type="GO" id="GO:0051898">
    <property type="term" value="P:negative regulation of phosphatidylinositol 3-kinase/protein kinase B signal transduction"/>
    <property type="evidence" value="ECO:0000266"/>
    <property type="project" value="RGD"/>
</dbReference>
<dbReference type="GO" id="GO:0050709">
    <property type="term" value="P:negative regulation of protein secretion"/>
    <property type="evidence" value="ECO:0000266"/>
    <property type="project" value="RGD"/>
</dbReference>
<dbReference type="GO" id="GO:0050805">
    <property type="term" value="P:negative regulation of synaptic transmission"/>
    <property type="evidence" value="ECO:0000314"/>
    <property type="project" value="RGD"/>
</dbReference>
<dbReference type="GO" id="GO:0051967">
    <property type="term" value="P:negative regulation of synaptic transmission, glutamatergic"/>
    <property type="evidence" value="ECO:0000266"/>
    <property type="project" value="RGD"/>
</dbReference>
<dbReference type="GO" id="GO:0001976">
    <property type="term" value="P:nervous system process involved in regulation of systemic arterial blood pressure"/>
    <property type="evidence" value="ECO:0000266"/>
    <property type="project" value="RGD"/>
</dbReference>
<dbReference type="GO" id="GO:0007405">
    <property type="term" value="P:neuroblast proliferation"/>
    <property type="evidence" value="ECO:0000266"/>
    <property type="project" value="RGD"/>
</dbReference>
<dbReference type="GO" id="GO:0001764">
    <property type="term" value="P:neuron migration"/>
    <property type="evidence" value="ECO:0000266"/>
    <property type="project" value="RGD"/>
</dbReference>
<dbReference type="GO" id="GO:0007270">
    <property type="term" value="P:neuron-neuron synaptic transmission"/>
    <property type="evidence" value="ECO:0000266"/>
    <property type="project" value="RGD"/>
</dbReference>
<dbReference type="GO" id="GO:0021769">
    <property type="term" value="P:orbitofrontal cortex development"/>
    <property type="evidence" value="ECO:0000270"/>
    <property type="project" value="RGD"/>
</dbReference>
<dbReference type="GO" id="GO:0030432">
    <property type="term" value="P:peristalsis"/>
    <property type="evidence" value="ECO:0000266"/>
    <property type="project" value="RGD"/>
</dbReference>
<dbReference type="GO" id="GO:0043491">
    <property type="term" value="P:phosphatidylinositol 3-kinase/protein kinase B signal transduction"/>
    <property type="evidence" value="ECO:0000266"/>
    <property type="project" value="RGD"/>
</dbReference>
<dbReference type="GO" id="GO:0060158">
    <property type="term" value="P:phospholipase C-activating dopamine receptor signaling pathway"/>
    <property type="evidence" value="ECO:0000266"/>
    <property type="project" value="RGD"/>
</dbReference>
<dbReference type="GO" id="GO:0007200">
    <property type="term" value="P:phospholipase C-activating G protein-coupled receptor signaling pathway"/>
    <property type="evidence" value="ECO:0000266"/>
    <property type="project" value="RGD"/>
</dbReference>
<dbReference type="GO" id="GO:0043473">
    <property type="term" value="P:pigmentation"/>
    <property type="evidence" value="ECO:0000266"/>
    <property type="project" value="RGD"/>
</dbReference>
<dbReference type="GO" id="GO:0032467">
    <property type="term" value="P:positive regulation of cytokinesis"/>
    <property type="evidence" value="ECO:0000266"/>
    <property type="project" value="RGD"/>
</dbReference>
<dbReference type="GO" id="GO:0051586">
    <property type="term" value="P:positive regulation of dopamine uptake involved in synaptic transmission"/>
    <property type="evidence" value="ECO:0000266"/>
    <property type="project" value="RGD"/>
</dbReference>
<dbReference type="GO" id="GO:0070374">
    <property type="term" value="P:positive regulation of ERK1 and ERK2 cascade"/>
    <property type="evidence" value="ECO:0000315"/>
    <property type="project" value="RGD"/>
</dbReference>
<dbReference type="GO" id="GO:0045745">
    <property type="term" value="P:positive regulation of G protein-coupled receptor signaling pathway"/>
    <property type="evidence" value="ECO:0000315"/>
    <property type="project" value="RGD"/>
</dbReference>
<dbReference type="GO" id="GO:1900168">
    <property type="term" value="P:positive regulation of glial cell-derived neurotrophic factor production"/>
    <property type="evidence" value="ECO:0000266"/>
    <property type="project" value="RGD"/>
</dbReference>
<dbReference type="GO" id="GO:0060124">
    <property type="term" value="P:positive regulation of growth hormone secretion"/>
    <property type="evidence" value="ECO:0000266"/>
    <property type="project" value="RGD"/>
</dbReference>
<dbReference type="GO" id="GO:1900273">
    <property type="term" value="P:positive regulation of long-term synaptic potentiation"/>
    <property type="evidence" value="ECO:0000315"/>
    <property type="project" value="RGD"/>
</dbReference>
<dbReference type="GO" id="GO:0045840">
    <property type="term" value="P:positive regulation of mitotic nuclear division"/>
    <property type="evidence" value="ECO:0000304"/>
    <property type="project" value="BHF-UCL"/>
</dbReference>
<dbReference type="GO" id="GO:0040018">
    <property type="term" value="P:positive regulation of multicellular organism growth"/>
    <property type="evidence" value="ECO:0000266"/>
    <property type="project" value="RGD"/>
</dbReference>
<dbReference type="GO" id="GO:0002052">
    <property type="term" value="P:positive regulation of neuroblast proliferation"/>
    <property type="evidence" value="ECO:0000266"/>
    <property type="project" value="RGD"/>
</dbReference>
<dbReference type="GO" id="GO:0050769">
    <property type="term" value="P:positive regulation of neurogenesis"/>
    <property type="evidence" value="ECO:0000314"/>
    <property type="project" value="RGD"/>
</dbReference>
<dbReference type="GO" id="GO:0002092">
    <property type="term" value="P:positive regulation of receptor internalization"/>
    <property type="evidence" value="ECO:0000315"/>
    <property type="project" value="RGD"/>
</dbReference>
<dbReference type="GO" id="GO:0035815">
    <property type="term" value="P:positive regulation of renal sodium excretion"/>
    <property type="evidence" value="ECO:0000266"/>
    <property type="project" value="RGD"/>
</dbReference>
<dbReference type="GO" id="GO:0045944">
    <property type="term" value="P:positive regulation of transcription by RNA polymerase II"/>
    <property type="evidence" value="ECO:0000314"/>
    <property type="project" value="RGD"/>
</dbReference>
<dbReference type="GO" id="GO:0035810">
    <property type="term" value="P:positive regulation of urine volume"/>
    <property type="evidence" value="ECO:0000266"/>
    <property type="project" value="RGD"/>
</dbReference>
<dbReference type="GO" id="GO:0099170">
    <property type="term" value="P:postsynaptic modulation of chemical synaptic transmission"/>
    <property type="evidence" value="ECO:0000314"/>
    <property type="project" value="SynGO"/>
</dbReference>
<dbReference type="GO" id="GO:0060134">
    <property type="term" value="P:prepulse inhibition"/>
    <property type="evidence" value="ECO:0000266"/>
    <property type="project" value="RGD"/>
</dbReference>
<dbReference type="GO" id="GO:0099171">
    <property type="term" value="P:presynaptic modulation of chemical synaptic transmission"/>
    <property type="evidence" value="ECO:0000266"/>
    <property type="project" value="RGD"/>
</dbReference>
<dbReference type="GO" id="GO:0008104">
    <property type="term" value="P:protein localization"/>
    <property type="evidence" value="ECO:0000266"/>
    <property type="project" value="RGD"/>
</dbReference>
<dbReference type="GO" id="GO:0014059">
    <property type="term" value="P:regulation of dopamine secretion"/>
    <property type="evidence" value="ECO:0000318"/>
    <property type="project" value="GO_Central"/>
</dbReference>
<dbReference type="GO" id="GO:0051584">
    <property type="term" value="P:regulation of dopamine uptake involved in synaptic transmission"/>
    <property type="evidence" value="ECO:0000266"/>
    <property type="project" value="RGD"/>
</dbReference>
<dbReference type="GO" id="GO:0002027">
    <property type="term" value="P:regulation of heart rate"/>
    <property type="evidence" value="ECO:0000266"/>
    <property type="project" value="RGD"/>
</dbReference>
<dbReference type="GO" id="GO:0090325">
    <property type="term" value="P:regulation of locomotion involved in locomotory behavior"/>
    <property type="evidence" value="ECO:0000315"/>
    <property type="project" value="RGD"/>
</dbReference>
<dbReference type="GO" id="GO:0048169">
    <property type="term" value="P:regulation of long-term neuronal synaptic plasticity"/>
    <property type="evidence" value="ECO:0000266"/>
    <property type="project" value="RGD"/>
</dbReference>
<dbReference type="GO" id="GO:0043408">
    <property type="term" value="P:regulation of MAPK cascade"/>
    <property type="evidence" value="ECO:0000314"/>
    <property type="project" value="RGD"/>
</dbReference>
<dbReference type="GO" id="GO:0051580">
    <property type="term" value="P:regulation of neurotransmitter uptake"/>
    <property type="evidence" value="ECO:0000266"/>
    <property type="project" value="RGD"/>
</dbReference>
<dbReference type="GO" id="GO:0043266">
    <property type="term" value="P:regulation of potassium ion transport"/>
    <property type="evidence" value="ECO:0000314"/>
    <property type="project" value="BHF-UCL"/>
</dbReference>
<dbReference type="GO" id="GO:0002028">
    <property type="term" value="P:regulation of sodium ion transport"/>
    <property type="evidence" value="ECO:0000266"/>
    <property type="project" value="RGD"/>
</dbReference>
<dbReference type="GO" id="GO:0051823">
    <property type="term" value="P:regulation of synapse structural plasticity"/>
    <property type="evidence" value="ECO:0000314"/>
    <property type="project" value="RGD"/>
</dbReference>
<dbReference type="GO" id="GO:0032228">
    <property type="term" value="P:regulation of synaptic transmission, GABAergic"/>
    <property type="evidence" value="ECO:0000266"/>
    <property type="project" value="RGD"/>
</dbReference>
<dbReference type="GO" id="GO:0051209">
    <property type="term" value="P:release of sequestered calcium ion into cytosol"/>
    <property type="evidence" value="ECO:0000315"/>
    <property type="project" value="BHF-UCL"/>
</dbReference>
<dbReference type="GO" id="GO:0001975">
    <property type="term" value="P:response to amphetamine"/>
    <property type="evidence" value="ECO:0000270"/>
    <property type="project" value="RGD"/>
</dbReference>
<dbReference type="GO" id="GO:0048678">
    <property type="term" value="P:response to axon injury"/>
    <property type="evidence" value="ECO:0000270"/>
    <property type="project" value="RGD"/>
</dbReference>
<dbReference type="GO" id="GO:0042220">
    <property type="term" value="P:response to cocaine"/>
    <property type="evidence" value="ECO:0000266"/>
    <property type="project" value="RGD"/>
</dbReference>
<dbReference type="GO" id="GO:0032355">
    <property type="term" value="P:response to estradiol"/>
    <property type="evidence" value="ECO:0000270"/>
    <property type="project" value="RGD"/>
</dbReference>
<dbReference type="GO" id="GO:0045471">
    <property type="term" value="P:response to ethanol"/>
    <property type="evidence" value="ECO:0000270"/>
    <property type="project" value="RGD"/>
</dbReference>
<dbReference type="GO" id="GO:0034776">
    <property type="term" value="P:response to histamine"/>
    <property type="evidence" value="ECO:0000266"/>
    <property type="project" value="RGD"/>
</dbReference>
<dbReference type="GO" id="GO:0001666">
    <property type="term" value="P:response to hypoxia"/>
    <property type="evidence" value="ECO:0000315"/>
    <property type="project" value="RGD"/>
</dbReference>
<dbReference type="GO" id="GO:0014854">
    <property type="term" value="P:response to inactivity"/>
    <property type="evidence" value="ECO:0000270"/>
    <property type="project" value="RGD"/>
</dbReference>
<dbReference type="GO" id="GO:0010039">
    <property type="term" value="P:response to iron ion"/>
    <property type="evidence" value="ECO:0000270"/>
    <property type="project" value="RGD"/>
</dbReference>
<dbReference type="GO" id="GO:0009416">
    <property type="term" value="P:response to light stimulus"/>
    <property type="evidence" value="ECO:0000266"/>
    <property type="project" value="RGD"/>
</dbReference>
<dbReference type="GO" id="GO:0043278">
    <property type="term" value="P:response to morphine"/>
    <property type="evidence" value="ECO:0000266"/>
    <property type="project" value="RGD"/>
</dbReference>
<dbReference type="GO" id="GO:0035094">
    <property type="term" value="P:response to nicotine"/>
    <property type="evidence" value="ECO:0000270"/>
    <property type="project" value="RGD"/>
</dbReference>
<dbReference type="GO" id="GO:0009636">
    <property type="term" value="P:response to toxic substance"/>
    <property type="evidence" value="ECO:0000270"/>
    <property type="project" value="RGD"/>
</dbReference>
<dbReference type="GO" id="GO:0009410">
    <property type="term" value="P:response to xenobiotic stimulus"/>
    <property type="evidence" value="ECO:0000314"/>
    <property type="project" value="BHF-UCL"/>
</dbReference>
<dbReference type="GO" id="GO:0007608">
    <property type="term" value="P:sensory perception of smell"/>
    <property type="evidence" value="ECO:0000266"/>
    <property type="project" value="RGD"/>
</dbReference>
<dbReference type="GO" id="GO:0001964">
    <property type="term" value="P:startle response"/>
    <property type="evidence" value="ECO:0000266"/>
    <property type="project" value="RGD"/>
</dbReference>
<dbReference type="GO" id="GO:0021756">
    <property type="term" value="P:striatum development"/>
    <property type="evidence" value="ECO:0000270"/>
    <property type="project" value="RGD"/>
</dbReference>
<dbReference type="GO" id="GO:0007416">
    <property type="term" value="P:synapse assembly"/>
    <property type="evidence" value="ECO:0000270"/>
    <property type="project" value="BHF-UCL"/>
</dbReference>
<dbReference type="GO" id="GO:0001659">
    <property type="term" value="P:temperature homeostasis"/>
    <property type="evidence" value="ECO:0000266"/>
    <property type="project" value="RGD"/>
</dbReference>
<dbReference type="GO" id="GO:0008542">
    <property type="term" value="P:visual learning"/>
    <property type="evidence" value="ECO:0000266"/>
    <property type="project" value="RGD"/>
</dbReference>
<dbReference type="GO" id="GO:0016055">
    <property type="term" value="P:Wnt signaling pathway"/>
    <property type="evidence" value="ECO:0000314"/>
    <property type="project" value="RGD"/>
</dbReference>
<dbReference type="CDD" id="cd15309">
    <property type="entry name" value="7tmA_D2_dopamine_R"/>
    <property type="match status" value="1"/>
</dbReference>
<dbReference type="FunFam" id="1.20.1070.10:FF:000099">
    <property type="entry name" value="D(2) dopamine receptor"/>
    <property type="match status" value="1"/>
</dbReference>
<dbReference type="FunFam" id="1.20.1070.10:FF:000086">
    <property type="entry name" value="Dopamine D2 receptor 2"/>
    <property type="match status" value="1"/>
</dbReference>
<dbReference type="Gene3D" id="1.20.1070.10">
    <property type="entry name" value="Rhodopsin 7-helix transmembrane proteins"/>
    <property type="match status" value="2"/>
</dbReference>
<dbReference type="InterPro" id="IPR001922">
    <property type="entry name" value="Dopamine_D2_rcpt"/>
</dbReference>
<dbReference type="InterPro" id="IPR000929">
    <property type="entry name" value="Dopamine_rcpt"/>
</dbReference>
<dbReference type="InterPro" id="IPR000276">
    <property type="entry name" value="GPCR_Rhodpsn"/>
</dbReference>
<dbReference type="InterPro" id="IPR017452">
    <property type="entry name" value="GPCR_Rhodpsn_7TM"/>
</dbReference>
<dbReference type="PANTHER" id="PTHR24248">
    <property type="entry name" value="ADRENERGIC RECEPTOR-RELATED G-PROTEIN COUPLED RECEPTOR"/>
    <property type="match status" value="1"/>
</dbReference>
<dbReference type="PANTHER" id="PTHR24248:SF87">
    <property type="entry name" value="D(2) DOPAMINE RECEPTOR"/>
    <property type="match status" value="1"/>
</dbReference>
<dbReference type="Pfam" id="PF00001">
    <property type="entry name" value="7tm_1"/>
    <property type="match status" value="1"/>
</dbReference>
<dbReference type="PRINTS" id="PR00567">
    <property type="entry name" value="DOPAMINED2R"/>
</dbReference>
<dbReference type="PRINTS" id="PR00242">
    <property type="entry name" value="DOPAMINER"/>
</dbReference>
<dbReference type="PRINTS" id="PR00237">
    <property type="entry name" value="GPCRRHODOPSN"/>
</dbReference>
<dbReference type="SMART" id="SM01381">
    <property type="entry name" value="7TM_GPCR_Srsx"/>
    <property type="match status" value="1"/>
</dbReference>
<dbReference type="SUPFAM" id="SSF81321">
    <property type="entry name" value="Family A G protein-coupled receptor-like"/>
    <property type="match status" value="1"/>
</dbReference>
<dbReference type="PROSITE" id="PS00237">
    <property type="entry name" value="G_PROTEIN_RECEP_F1_1"/>
    <property type="match status" value="1"/>
</dbReference>
<dbReference type="PROSITE" id="PS50262">
    <property type="entry name" value="G_PROTEIN_RECEP_F1_2"/>
    <property type="match status" value="1"/>
</dbReference>